<reference key="1">
    <citation type="journal article" date="2004" name="Proc. Natl. Acad. Sci. U.S.A.">
        <title>Comparison of the genome of the oral pathogen Treponema denticola with other spirochete genomes.</title>
        <authorList>
            <person name="Seshadri R."/>
            <person name="Myers G.S.A."/>
            <person name="Tettelin H."/>
            <person name="Eisen J.A."/>
            <person name="Heidelberg J.F."/>
            <person name="Dodson R.J."/>
            <person name="Davidsen T.M."/>
            <person name="DeBoy R.T."/>
            <person name="Fouts D.E."/>
            <person name="Haft D.H."/>
            <person name="Selengut J."/>
            <person name="Ren Q."/>
            <person name="Brinkac L.M."/>
            <person name="Madupu R."/>
            <person name="Kolonay J.F."/>
            <person name="Durkin S.A."/>
            <person name="Daugherty S.C."/>
            <person name="Shetty J."/>
            <person name="Shvartsbeyn A."/>
            <person name="Gebregeorgis E."/>
            <person name="Geer K."/>
            <person name="Tsegaye G."/>
            <person name="Malek J.A."/>
            <person name="Ayodeji B."/>
            <person name="Shatsman S."/>
            <person name="McLeod M.P."/>
            <person name="Smajs D."/>
            <person name="Howell J.K."/>
            <person name="Pal S."/>
            <person name="Amin A."/>
            <person name="Vashisth P."/>
            <person name="McNeill T.Z."/>
            <person name="Xiang Q."/>
            <person name="Sodergren E."/>
            <person name="Baca E."/>
            <person name="Weinstock G.M."/>
            <person name="Norris S.J."/>
            <person name="Fraser C.M."/>
            <person name="Paulsen I.T."/>
        </authorList>
    </citation>
    <scope>NUCLEOTIDE SEQUENCE [LARGE SCALE GENOMIC DNA]</scope>
    <source>
        <strain>ATCC 35405 / DSM 14222 / CIP 103919 / JCM 8153 / KCTC 15104</strain>
    </source>
</reference>
<evidence type="ECO:0000255" key="1">
    <source>
        <dbReference type="HAMAP-Rule" id="MF_01368"/>
    </source>
</evidence>
<evidence type="ECO:0000256" key="2">
    <source>
        <dbReference type="SAM" id="MobiDB-lite"/>
    </source>
</evidence>
<evidence type="ECO:0000305" key="3"/>
<name>RL17_TREDE</name>
<gene>
    <name evidence="1" type="primary">rplQ</name>
    <name type="ordered locus">TDE_0792</name>
</gene>
<proteinExistence type="inferred from homology"/>
<feature type="chain" id="PRO_1000055985" description="Large ribosomal subunit protein bL17">
    <location>
        <begin position="1"/>
        <end position="179"/>
    </location>
</feature>
<feature type="region of interest" description="Disordered" evidence="2">
    <location>
        <begin position="123"/>
        <end position="179"/>
    </location>
</feature>
<feature type="compositionally biased region" description="Basic and acidic residues" evidence="2">
    <location>
        <begin position="123"/>
        <end position="161"/>
    </location>
</feature>
<feature type="compositionally biased region" description="Polar residues" evidence="2">
    <location>
        <begin position="162"/>
        <end position="171"/>
    </location>
</feature>
<organism>
    <name type="scientific">Treponema denticola (strain ATCC 35405 / DSM 14222 / CIP 103919 / JCM 8153 / KCTC 15104)</name>
    <dbReference type="NCBI Taxonomy" id="243275"/>
    <lineage>
        <taxon>Bacteria</taxon>
        <taxon>Pseudomonadati</taxon>
        <taxon>Spirochaetota</taxon>
        <taxon>Spirochaetia</taxon>
        <taxon>Spirochaetales</taxon>
        <taxon>Treponemataceae</taxon>
        <taxon>Treponema</taxon>
    </lineage>
</organism>
<protein>
    <recommendedName>
        <fullName evidence="1">Large ribosomal subunit protein bL17</fullName>
    </recommendedName>
    <alternativeName>
        <fullName evidence="3">50S ribosomal protein L17</fullName>
    </alternativeName>
</protein>
<dbReference type="EMBL" id="AE017226">
    <property type="protein sequence ID" value="AAS11283.1"/>
    <property type="molecule type" value="Genomic_DNA"/>
</dbReference>
<dbReference type="RefSeq" id="NP_971402.1">
    <property type="nucleotide sequence ID" value="NC_002967.9"/>
</dbReference>
<dbReference type="RefSeq" id="WP_002682042.1">
    <property type="nucleotide sequence ID" value="NC_002967.9"/>
</dbReference>
<dbReference type="SMR" id="Q73PK7"/>
<dbReference type="STRING" id="243275.TDE_0792"/>
<dbReference type="PaxDb" id="243275-TDE_0792"/>
<dbReference type="GeneID" id="2740670"/>
<dbReference type="KEGG" id="tde:TDE_0792"/>
<dbReference type="PATRIC" id="fig|243275.7.peg.765"/>
<dbReference type="eggNOG" id="COG0203">
    <property type="taxonomic scope" value="Bacteria"/>
</dbReference>
<dbReference type="HOGENOM" id="CLU_074407_0_1_12"/>
<dbReference type="OrthoDB" id="9809073at2"/>
<dbReference type="Proteomes" id="UP000008212">
    <property type="component" value="Chromosome"/>
</dbReference>
<dbReference type="GO" id="GO:0022625">
    <property type="term" value="C:cytosolic large ribosomal subunit"/>
    <property type="evidence" value="ECO:0007669"/>
    <property type="project" value="TreeGrafter"/>
</dbReference>
<dbReference type="GO" id="GO:0003735">
    <property type="term" value="F:structural constituent of ribosome"/>
    <property type="evidence" value="ECO:0007669"/>
    <property type="project" value="InterPro"/>
</dbReference>
<dbReference type="GO" id="GO:0006412">
    <property type="term" value="P:translation"/>
    <property type="evidence" value="ECO:0007669"/>
    <property type="project" value="UniProtKB-UniRule"/>
</dbReference>
<dbReference type="Gene3D" id="3.90.1030.10">
    <property type="entry name" value="Ribosomal protein L17"/>
    <property type="match status" value="1"/>
</dbReference>
<dbReference type="HAMAP" id="MF_01368">
    <property type="entry name" value="Ribosomal_bL17"/>
    <property type="match status" value="1"/>
</dbReference>
<dbReference type="InterPro" id="IPR000456">
    <property type="entry name" value="Ribosomal_bL17"/>
</dbReference>
<dbReference type="InterPro" id="IPR036373">
    <property type="entry name" value="Ribosomal_bL17_sf"/>
</dbReference>
<dbReference type="NCBIfam" id="TIGR00059">
    <property type="entry name" value="L17"/>
    <property type="match status" value="1"/>
</dbReference>
<dbReference type="PANTHER" id="PTHR14413:SF16">
    <property type="entry name" value="LARGE RIBOSOMAL SUBUNIT PROTEIN BL17M"/>
    <property type="match status" value="1"/>
</dbReference>
<dbReference type="PANTHER" id="PTHR14413">
    <property type="entry name" value="RIBOSOMAL PROTEIN L17"/>
    <property type="match status" value="1"/>
</dbReference>
<dbReference type="Pfam" id="PF01196">
    <property type="entry name" value="Ribosomal_L17"/>
    <property type="match status" value="1"/>
</dbReference>
<dbReference type="SUPFAM" id="SSF64263">
    <property type="entry name" value="Prokaryotic ribosomal protein L17"/>
    <property type="match status" value="1"/>
</dbReference>
<keyword id="KW-1185">Reference proteome</keyword>
<keyword id="KW-0687">Ribonucleoprotein</keyword>
<keyword id="KW-0689">Ribosomal protein</keyword>
<accession>Q73PK7</accession>
<comment type="subunit">
    <text evidence="1">Part of the 50S ribosomal subunit. Contacts protein L32.</text>
</comment>
<comment type="similarity">
    <text evidence="1">Belongs to the bacterial ribosomal protein bL17 family.</text>
</comment>
<sequence length="179" mass="20819">MKHKNGFNPLSRTTAHRRALHRNMVTSLFKYERITTTKQKAMEVRRTAEKLITRSKVDTFNNRRHAAKYIWDDDIVKKLFSDIGPRMKDRNGGYTRILKIGFREGDAADVAILELVDYDFEKKEKDTKKKDDSKKSDDKKTSKKEAGFKSSKGESEHKKNTDQVVDSSSNRRYNRVKGS</sequence>